<reference key="1">
    <citation type="journal article" date="1995" name="FEMS Microbiol. Lett.">
        <title>Characterization of the superoxide dismutase gene and its upstream region from Methanobacterium thermoautotrophicum Marburg.</title>
        <authorList>
            <person name="Meile L."/>
            <person name="Fischer K."/>
            <person name="Leisinger T."/>
        </authorList>
    </citation>
    <scope>NUCLEOTIDE SEQUENCE [GENOMIC DNA]</scope>
    <source>
        <strain>ATCC BAA-927 / DSM 2133 / JCM 14651 / NBRC 100331 / OCM 82 / Marburg</strain>
    </source>
</reference>
<reference key="2">
    <citation type="journal article" date="2010" name="J. Bacteriol.">
        <title>Complete genome sequence of Methanothermobacter marburgensis, a methanoarchaeon model organism.</title>
        <authorList>
            <person name="Liesegang H."/>
            <person name="Kaster A.K."/>
            <person name="Wiezer A."/>
            <person name="Goenrich M."/>
            <person name="Wollherr A."/>
            <person name="Seedorf H."/>
            <person name="Gottschalk G."/>
            <person name="Thauer R.K."/>
        </authorList>
    </citation>
    <scope>NUCLEOTIDE SEQUENCE [LARGE SCALE GENOMIC DNA]</scope>
    <source>
        <strain>ATCC BAA-927 / DSM 2133 / JCM 14651 / NBRC 100331 / OCM 82 / Marburg</strain>
    </source>
</reference>
<dbReference type="EC" id="1.11.1.24" evidence="1"/>
<dbReference type="EMBL" id="X74264">
    <property type="protein sequence ID" value="CAA52324.1"/>
    <property type="molecule type" value="Genomic_DNA"/>
</dbReference>
<dbReference type="EMBL" id="CP001710">
    <property type="protein sequence ID" value="ADL58205.1"/>
    <property type="status" value="ALT_INIT"/>
    <property type="molecule type" value="Genomic_DNA"/>
</dbReference>
<dbReference type="PIR" id="S51098">
    <property type="entry name" value="S51098"/>
</dbReference>
<dbReference type="RefSeq" id="WP_013295429.1">
    <property type="nucleotide sequence ID" value="NC_014408.1"/>
</dbReference>
<dbReference type="SMR" id="Q57109"/>
<dbReference type="STRING" id="79929.MTBMA_c06100"/>
<dbReference type="PaxDb" id="79929-MTBMA_c06100"/>
<dbReference type="GeneID" id="9704318"/>
<dbReference type="KEGG" id="mmg:MTBMA_c06100"/>
<dbReference type="PATRIC" id="fig|79929.8.peg.594"/>
<dbReference type="HOGENOM" id="CLU_042529_4_4_2"/>
<dbReference type="OrthoDB" id="6924at2157"/>
<dbReference type="Proteomes" id="UP000000345">
    <property type="component" value="Chromosome"/>
</dbReference>
<dbReference type="GO" id="GO:0005829">
    <property type="term" value="C:cytosol"/>
    <property type="evidence" value="ECO:0007669"/>
    <property type="project" value="TreeGrafter"/>
</dbReference>
<dbReference type="GO" id="GO:0008379">
    <property type="term" value="F:thioredoxin peroxidase activity"/>
    <property type="evidence" value="ECO:0007669"/>
    <property type="project" value="TreeGrafter"/>
</dbReference>
<dbReference type="GO" id="GO:0045454">
    <property type="term" value="P:cell redox homeostasis"/>
    <property type="evidence" value="ECO:0007669"/>
    <property type="project" value="TreeGrafter"/>
</dbReference>
<dbReference type="GO" id="GO:0033554">
    <property type="term" value="P:cellular response to stress"/>
    <property type="evidence" value="ECO:0007669"/>
    <property type="project" value="TreeGrafter"/>
</dbReference>
<dbReference type="GO" id="GO:0042744">
    <property type="term" value="P:hydrogen peroxide catabolic process"/>
    <property type="evidence" value="ECO:0007669"/>
    <property type="project" value="TreeGrafter"/>
</dbReference>
<dbReference type="GO" id="GO:0006979">
    <property type="term" value="P:response to oxidative stress"/>
    <property type="evidence" value="ECO:0007669"/>
    <property type="project" value="TreeGrafter"/>
</dbReference>
<dbReference type="CDD" id="cd03016">
    <property type="entry name" value="PRX_1cys"/>
    <property type="match status" value="1"/>
</dbReference>
<dbReference type="FunFam" id="3.30.1020.10:FF:000002">
    <property type="entry name" value="Peroxiredoxin"/>
    <property type="match status" value="1"/>
</dbReference>
<dbReference type="Gene3D" id="3.30.1020.10">
    <property type="entry name" value="Antioxidant, Horf6, Chain A, domain2"/>
    <property type="match status" value="1"/>
</dbReference>
<dbReference type="Gene3D" id="3.40.30.10">
    <property type="entry name" value="Glutaredoxin"/>
    <property type="match status" value="1"/>
</dbReference>
<dbReference type="HAMAP" id="MF_00401">
    <property type="entry name" value="Peroxiredoxin"/>
    <property type="match status" value="1"/>
</dbReference>
<dbReference type="InterPro" id="IPR000866">
    <property type="entry name" value="AhpC/TSA"/>
</dbReference>
<dbReference type="InterPro" id="IPR050217">
    <property type="entry name" value="Peroxiredoxin"/>
</dbReference>
<dbReference type="InterPro" id="IPR024706">
    <property type="entry name" value="Peroxiredoxin_AhpC-typ"/>
</dbReference>
<dbReference type="InterPro" id="IPR019479">
    <property type="entry name" value="Peroxiredoxin_C"/>
</dbReference>
<dbReference type="InterPro" id="IPR022915">
    <property type="entry name" value="Peroxiredoxin_TDXH"/>
</dbReference>
<dbReference type="InterPro" id="IPR045020">
    <property type="entry name" value="PRX_1cys"/>
</dbReference>
<dbReference type="InterPro" id="IPR036249">
    <property type="entry name" value="Thioredoxin-like_sf"/>
</dbReference>
<dbReference type="InterPro" id="IPR013766">
    <property type="entry name" value="Thioredoxin_domain"/>
</dbReference>
<dbReference type="NCBIfam" id="NF009668">
    <property type="entry name" value="PRK13189.1"/>
    <property type="match status" value="1"/>
</dbReference>
<dbReference type="PANTHER" id="PTHR10681:SF171">
    <property type="entry name" value="PEROXIREDOXIN 4"/>
    <property type="match status" value="1"/>
</dbReference>
<dbReference type="PANTHER" id="PTHR10681">
    <property type="entry name" value="THIOREDOXIN PEROXIDASE"/>
    <property type="match status" value="1"/>
</dbReference>
<dbReference type="Pfam" id="PF10417">
    <property type="entry name" value="1-cysPrx_C"/>
    <property type="match status" value="1"/>
</dbReference>
<dbReference type="Pfam" id="PF00578">
    <property type="entry name" value="AhpC-TSA"/>
    <property type="match status" value="1"/>
</dbReference>
<dbReference type="PIRSF" id="PIRSF000239">
    <property type="entry name" value="AHPC"/>
    <property type="match status" value="1"/>
</dbReference>
<dbReference type="SUPFAM" id="SSF52833">
    <property type="entry name" value="Thioredoxin-like"/>
    <property type="match status" value="1"/>
</dbReference>
<dbReference type="PROSITE" id="PS51352">
    <property type="entry name" value="THIOREDOXIN_2"/>
    <property type="match status" value="1"/>
</dbReference>
<comment type="function">
    <text evidence="1">Thiol-specific peroxidase that catalyzes the reduction of hydrogen peroxide and organic hydroperoxides to water and alcohols, respectively. Plays a role in cell protection against oxidative stress by detoxifying peroxides.</text>
</comment>
<comment type="catalytic activity">
    <reaction evidence="1">
        <text>a hydroperoxide + [thioredoxin]-dithiol = an alcohol + [thioredoxin]-disulfide + H2O</text>
        <dbReference type="Rhea" id="RHEA:62620"/>
        <dbReference type="Rhea" id="RHEA-COMP:10698"/>
        <dbReference type="Rhea" id="RHEA-COMP:10700"/>
        <dbReference type="ChEBI" id="CHEBI:15377"/>
        <dbReference type="ChEBI" id="CHEBI:29950"/>
        <dbReference type="ChEBI" id="CHEBI:30879"/>
        <dbReference type="ChEBI" id="CHEBI:35924"/>
        <dbReference type="ChEBI" id="CHEBI:50058"/>
        <dbReference type="EC" id="1.11.1.24"/>
    </reaction>
</comment>
<comment type="subunit">
    <text evidence="1">Homodecamer. Pentamer of dimers that assemble into a ring structure.</text>
</comment>
<comment type="subcellular location">
    <subcellularLocation>
        <location evidence="1">Cytoplasm</location>
    </subcellularLocation>
</comment>
<comment type="miscellaneous">
    <text evidence="1">The active site is a conserved redox-active cysteine residue, the peroxidatic cysteine (C(P)), which makes the nucleophilic attack on the peroxide substrate. The peroxide oxidizes the C(P)-SH to cysteine sulfenic acid (C(P)-SOH), which then reacts with another cysteine residue, the resolving cysteine (C(R)), to form a disulfide bridge. The disulfide is subsequently reduced by an appropriate electron donor to complete the catalytic cycle. Although the primary sequence of this enzyme is similar to those of the 1-Cys Prx6 enzymes, its catalytic properties resemble those of the typical 2-Cys Prxs and C(R) is provided by the other dimeric subunit to form an intersubunit disulfide. The disulfide is subsequently reduced by thioredoxin.</text>
</comment>
<comment type="similarity">
    <text evidence="1">Belongs to the peroxiredoxin family. Prx6 subfamily.</text>
</comment>
<comment type="sequence caution" evidence="2">
    <conflict type="erroneous initiation">
        <sequence resource="EMBL-CDS" id="ADL58205"/>
    </conflict>
    <text>Extended N-terminus.</text>
</comment>
<protein>
    <recommendedName>
        <fullName evidence="1">Peroxiredoxin</fullName>
        <ecNumber evidence="1">1.11.1.24</ecNumber>
    </recommendedName>
    <alternativeName>
        <fullName evidence="1">Thioredoxin peroxidase</fullName>
    </alternativeName>
    <alternativeName>
        <fullName evidence="1">Thioredoxin-dependent peroxiredoxin</fullName>
    </alternativeName>
</protein>
<evidence type="ECO:0000255" key="1">
    <source>
        <dbReference type="HAMAP-Rule" id="MF_00401"/>
    </source>
</evidence>
<evidence type="ECO:0000305" key="2"/>
<proteinExistence type="inferred from homology"/>
<name>TDXH_METTM</name>
<sequence>MPLIGDKFPEMEVQTTHGLMKLPAEFKGRWFILFSHPADFTPVCTTEFVAFQEVYPELRELDCELVGLSVDQVFSHIKWIEWIEENLDTEIEFPVIADTGRVADTLGLIHPARPTNTVRAVFVVDPEGIIRAILYYPQELGRNIPEIVRMIRAFRVIDAEGVAAPANWPDNQLIGDHVIVPPASDIETARKRKEEYECYDWWLCHRSASGD</sequence>
<organism>
    <name type="scientific">Methanothermobacter marburgensis (strain ATCC BAA-927 / DSM 2133 / JCM 14651 / NBRC 100331 / OCM 82 / Marburg)</name>
    <name type="common">Methanobacterium thermoautotrophicum</name>
    <dbReference type="NCBI Taxonomy" id="79929"/>
    <lineage>
        <taxon>Archaea</taxon>
        <taxon>Methanobacteriati</taxon>
        <taxon>Methanobacteriota</taxon>
        <taxon>Methanomada group</taxon>
        <taxon>Methanobacteria</taxon>
        <taxon>Methanobacteriales</taxon>
        <taxon>Methanobacteriaceae</taxon>
        <taxon>Methanothermobacter</taxon>
    </lineage>
</organism>
<feature type="chain" id="PRO_0000135159" description="Peroxiredoxin">
    <location>
        <begin position="1"/>
        <end position="211"/>
    </location>
</feature>
<feature type="domain" description="Thioredoxin" evidence="1">
    <location>
        <begin position="2"/>
        <end position="156"/>
    </location>
</feature>
<feature type="active site" description="Cysteine sulfenic acid (-SOH) intermediate" evidence="1">
    <location>
        <position position="44"/>
    </location>
</feature>
<feature type="binding site" evidence="1">
    <location>
        <position position="119"/>
    </location>
    <ligand>
        <name>substrate</name>
    </ligand>
</feature>
<feature type="disulfide bond" description="Interchain (with C-204); in linked form" evidence="1">
    <location>
        <position position="44"/>
    </location>
</feature>
<feature type="disulfide bond" description="Alternate" evidence="1">
    <location>
        <begin position="198"/>
        <end position="204"/>
    </location>
</feature>
<feature type="disulfide bond" description="Interchain (with C-44); in linked form" evidence="1">
    <location>
        <position position="204"/>
    </location>
</feature>
<feature type="sequence conflict" description="In Ref. 1; CAA52324." evidence="2" ref="1">
    <original>WWLCHRSASGD</original>
    <variation>LALPPQRKW</variation>
    <location>
        <begin position="201"/>
        <end position="211"/>
    </location>
</feature>
<gene>
    <name type="ordered locus">MTBMA_c06100</name>
</gene>
<keyword id="KW-0049">Antioxidant</keyword>
<keyword id="KW-0963">Cytoplasm</keyword>
<keyword id="KW-1015">Disulfide bond</keyword>
<keyword id="KW-0560">Oxidoreductase</keyword>
<keyword id="KW-0575">Peroxidase</keyword>
<keyword id="KW-0676">Redox-active center</keyword>
<accession>Q57109</accession>
<accession>D9PVF7</accession>